<keyword id="KW-0255">Endonuclease</keyword>
<keyword id="KW-0378">Hydrolase</keyword>
<keyword id="KW-0540">Nuclease</keyword>
<keyword id="KW-1185">Reference proteome</keyword>
<keyword id="KW-0677">Repeat</keyword>
<keyword id="KW-0694">RNA-binding</keyword>
<organism>
    <name type="scientific">Arabidopsis thaliana</name>
    <name type="common">Mouse-ear cress</name>
    <dbReference type="NCBI Taxonomy" id="3702"/>
    <lineage>
        <taxon>Eukaryota</taxon>
        <taxon>Viridiplantae</taxon>
        <taxon>Streptophyta</taxon>
        <taxon>Embryophyta</taxon>
        <taxon>Tracheophyta</taxon>
        <taxon>Spermatophyta</taxon>
        <taxon>Magnoliopsida</taxon>
        <taxon>eudicotyledons</taxon>
        <taxon>Gunneridae</taxon>
        <taxon>Pentapetalae</taxon>
        <taxon>rosids</taxon>
        <taxon>malvids</taxon>
        <taxon>Brassicales</taxon>
        <taxon>Brassicaceae</taxon>
        <taxon>Camelineae</taxon>
        <taxon>Arabidopsis</taxon>
    </lineage>
</organism>
<sequence>MNSVEAVEKILNYSFVNKTLLKEAITQKSPLFDRLEFFGDSILEVAFTNYICHTYPNLKVKELRDLRTANVSNEKFARIAVNHNLHHFLLLQNPSLFKKVKNFAEAVRKEDDPVPYGGLVKAPKILADTLESIAATVFIDVNYDVKRLWEIFRSLLEPIYTPDDLLLQPKLPFLTLFRLADKHGSESTSGIRKMTTSTKILLRNKDCLDVDLEDVKGKSFEICSTELFSLSTVSENSLTDEMSQEEVVIDEDSPNVEPEDVKGKLFEICYTRKLQIQTGSSGNPLTYEMTTKQMVVDKDSLHVEPVNGRGELIEICTKNKWPRPIFSVQEEKGPKNEPKFVCSVKIEIPNIEGTFHMKGDIKSKKKQAENSLAYHMIRALESSLVSLVISNLQKPKSLDEKNNPLLFSSEMDSSVEAVEKILNYSFVNKTLLKELLTHNNSPLFQGLMFVGESALSLAFTKHLYLTYPMLEPKDLSVLRDANTCHDKYACVAVKKGIYQSFIGSVPKPEKMTTDFIELMGKEDDPYRVVKAPKILVNLLAGVAGAVYIDVKYNVQRLLEIFRVLLEPIYTLDDLRMQLKQPFLMLFRLADKHGKQIDFRYSKDGGSRKNIAQVYMDDMFIASGCAKRIDTAKLLAAEEAIQKLSECMPIEKIIHQDNLDGEVIQTGSSSLLTAFENPLTEEMTQEQMVIDEDSLDVEWKLFETEELQIQTGSSSMSTVSENPLPCEITPTKMVIGEVSPHVELEDVKGKSFEISSTETSSLPIAFENPLTNELTQEQMVIDENSPYVEPVDTKGKLFESCSVESSSLPTTSENPSTYEMTTKQMVVDKDSPHVEPEDEKGKLFEICAKNKWPNPIFSVEEERGQQNEQKIVCSVKIEIPNIEGTFHIKGDAKPTKKEAENSSADHMIRALESSVMSLVITNLQMHENLDGKKKNLQMKESLNENKTLLHSTKRRRRL</sequence>
<proteinExistence type="evidence at transcript level"/>
<comment type="function">
    <text evidence="1">Ribonuclease that cleaves double-stranded RNA (dsRNA).</text>
</comment>
<reference key="1">
    <citation type="journal article" date="1998" name="DNA Res.">
        <title>Structural analysis of Arabidopsis thaliana chromosome 5. VI. Sequence features of the regions of 1,367,185 bp covered by 19 physically assigned P1 and TAC clones.</title>
        <authorList>
            <person name="Kotani H."/>
            <person name="Nakamura Y."/>
            <person name="Sato S."/>
            <person name="Asamizu E."/>
            <person name="Kaneko T."/>
            <person name="Miyajima N."/>
            <person name="Tabata S."/>
        </authorList>
    </citation>
    <scope>NUCLEOTIDE SEQUENCE [LARGE SCALE GENOMIC DNA]</scope>
    <source>
        <strain>cv. Columbia</strain>
    </source>
</reference>
<reference key="2">
    <citation type="journal article" date="2017" name="Plant J.">
        <title>Araport11: a complete reannotation of the Arabidopsis thaliana reference genome.</title>
        <authorList>
            <person name="Cheng C.Y."/>
            <person name="Krishnakumar V."/>
            <person name="Chan A.P."/>
            <person name="Thibaud-Nissen F."/>
            <person name="Schobel S."/>
            <person name="Town C.D."/>
        </authorList>
    </citation>
    <scope>GENOME REANNOTATION</scope>
    <source>
        <strain>cv. Columbia</strain>
    </source>
</reference>
<feature type="chain" id="PRO_0000404664" description="Ribonuclease 3-like protein 3">
    <location>
        <begin position="1"/>
        <end position="957"/>
    </location>
</feature>
<feature type="domain" description="RNase III 1" evidence="2">
    <location>
        <begin position="4"/>
        <end position="142"/>
    </location>
</feature>
<feature type="domain" description="DRBM 1" evidence="3">
    <location>
        <begin position="307"/>
        <end position="382"/>
    </location>
</feature>
<feature type="domain" description="RNase III 2" evidence="2">
    <location>
        <begin position="415"/>
        <end position="551"/>
    </location>
</feature>
<feature type="domain" description="DRBM 2" evidence="3">
    <location>
        <begin position="566"/>
        <end position="645"/>
    </location>
</feature>
<feature type="domain" description="DRBM 3" evidence="3">
    <location>
        <begin position="837"/>
        <end position="912"/>
    </location>
</feature>
<accession>Q9FKF0</accession>
<evidence type="ECO:0000250" key="1"/>
<evidence type="ECO:0000255" key="2">
    <source>
        <dbReference type="PROSITE-ProRule" id="PRU00177"/>
    </source>
</evidence>
<evidence type="ECO:0000255" key="3">
    <source>
        <dbReference type="PROSITE-ProRule" id="PRU00266"/>
    </source>
</evidence>
<dbReference type="EC" id="3.1.26.-"/>
<dbReference type="EMBL" id="AB012240">
    <property type="protein sequence ID" value="BAB11388.1"/>
    <property type="molecule type" value="Genomic_DNA"/>
</dbReference>
<dbReference type="EMBL" id="CP002688">
    <property type="protein sequence ID" value="AED95210.1"/>
    <property type="molecule type" value="Genomic_DNA"/>
</dbReference>
<dbReference type="RefSeq" id="NP_199328.1">
    <property type="nucleotide sequence ID" value="NM_123883.2"/>
</dbReference>
<dbReference type="SMR" id="Q9FKF0"/>
<dbReference type="STRING" id="3702.Q9FKF0"/>
<dbReference type="iPTMnet" id="Q9FKF0"/>
<dbReference type="PaxDb" id="3702-AT5G45150.1"/>
<dbReference type="ProteomicsDB" id="226573"/>
<dbReference type="EnsemblPlants" id="AT5G45150.1">
    <property type="protein sequence ID" value="AT5G45150.1"/>
    <property type="gene ID" value="AT5G45150"/>
</dbReference>
<dbReference type="GeneID" id="834551"/>
<dbReference type="Gramene" id="AT5G45150.1">
    <property type="protein sequence ID" value="AT5G45150.1"/>
    <property type="gene ID" value="AT5G45150"/>
</dbReference>
<dbReference type="KEGG" id="ath:AT5G45150"/>
<dbReference type="Araport" id="AT5G45150"/>
<dbReference type="TAIR" id="AT5G45150">
    <property type="gene designation" value="RTL3"/>
</dbReference>
<dbReference type="eggNOG" id="KOG0701">
    <property type="taxonomic scope" value="Eukaryota"/>
</dbReference>
<dbReference type="HOGENOM" id="CLU_323998_0_0_1"/>
<dbReference type="InParanoid" id="Q9FKF0"/>
<dbReference type="PhylomeDB" id="Q9FKF0"/>
<dbReference type="PRO" id="PR:Q9FKF0"/>
<dbReference type="Proteomes" id="UP000006548">
    <property type="component" value="Chromosome 5"/>
</dbReference>
<dbReference type="ExpressionAtlas" id="Q9FKF0">
    <property type="expression patterns" value="baseline and differential"/>
</dbReference>
<dbReference type="GO" id="GO:0004525">
    <property type="term" value="F:ribonuclease III activity"/>
    <property type="evidence" value="ECO:0007669"/>
    <property type="project" value="InterPro"/>
</dbReference>
<dbReference type="GO" id="GO:0003723">
    <property type="term" value="F:RNA binding"/>
    <property type="evidence" value="ECO:0007669"/>
    <property type="project" value="UniProtKB-KW"/>
</dbReference>
<dbReference type="GO" id="GO:0006396">
    <property type="term" value="P:RNA processing"/>
    <property type="evidence" value="ECO:0007669"/>
    <property type="project" value="InterPro"/>
</dbReference>
<dbReference type="CDD" id="cd00048">
    <property type="entry name" value="DSRM_SF"/>
    <property type="match status" value="2"/>
</dbReference>
<dbReference type="CDD" id="cd00593">
    <property type="entry name" value="RIBOc"/>
    <property type="match status" value="2"/>
</dbReference>
<dbReference type="FunFam" id="3.30.160.20:FF:000112">
    <property type="entry name" value="Ribonuclease 3-like protein 3"/>
    <property type="match status" value="2"/>
</dbReference>
<dbReference type="Gene3D" id="3.30.160.20">
    <property type="match status" value="2"/>
</dbReference>
<dbReference type="Gene3D" id="1.10.1520.10">
    <property type="entry name" value="Ribonuclease III domain"/>
    <property type="match status" value="2"/>
</dbReference>
<dbReference type="InterPro" id="IPR014720">
    <property type="entry name" value="dsRBD_dom"/>
</dbReference>
<dbReference type="InterPro" id="IPR000999">
    <property type="entry name" value="RNase_III_dom"/>
</dbReference>
<dbReference type="InterPro" id="IPR036389">
    <property type="entry name" value="RNase_III_sf"/>
</dbReference>
<dbReference type="PANTHER" id="PTHR14950">
    <property type="entry name" value="DICER-RELATED"/>
    <property type="match status" value="1"/>
</dbReference>
<dbReference type="PANTHER" id="PTHR14950:SF49">
    <property type="entry name" value="RIBONUCLEASE 3-LIKE PROTEIN 2-RELATED"/>
    <property type="match status" value="1"/>
</dbReference>
<dbReference type="Pfam" id="PF14709">
    <property type="entry name" value="DND1_DSRM"/>
    <property type="match status" value="2"/>
</dbReference>
<dbReference type="Pfam" id="PF00035">
    <property type="entry name" value="dsrm"/>
    <property type="match status" value="1"/>
</dbReference>
<dbReference type="Pfam" id="PF00636">
    <property type="entry name" value="Ribonuclease_3"/>
    <property type="match status" value="2"/>
</dbReference>
<dbReference type="SMART" id="SM00358">
    <property type="entry name" value="DSRM"/>
    <property type="match status" value="3"/>
</dbReference>
<dbReference type="SMART" id="SM00535">
    <property type="entry name" value="RIBOc"/>
    <property type="match status" value="2"/>
</dbReference>
<dbReference type="SUPFAM" id="SSF54768">
    <property type="entry name" value="dsRNA-binding domain-like"/>
    <property type="match status" value="3"/>
</dbReference>
<dbReference type="SUPFAM" id="SSF69065">
    <property type="entry name" value="RNase III domain-like"/>
    <property type="match status" value="2"/>
</dbReference>
<dbReference type="PROSITE" id="PS50137">
    <property type="entry name" value="DS_RBD"/>
    <property type="match status" value="3"/>
</dbReference>
<dbReference type="PROSITE" id="PS50142">
    <property type="entry name" value="RNASE_3_2"/>
    <property type="match status" value="2"/>
</dbReference>
<gene>
    <name type="primary">RTL3</name>
    <name type="ordered locus">At5g45150</name>
    <name type="ORF">K18C1.3</name>
</gene>
<name>RTL3_ARATH</name>
<protein>
    <recommendedName>
        <fullName>Ribonuclease 3-like protein 3</fullName>
        <ecNumber>3.1.26.-</ecNumber>
    </recommendedName>
    <alternativeName>
        <fullName>Ribonuclease III-like protein 3</fullName>
        <shortName>RNase III-like protein 3</shortName>
    </alternativeName>
    <alternativeName>
        <fullName>Ribonuclease three-like protein 3</fullName>
    </alternativeName>
</protein>